<dbReference type="EMBL" id="EU401852">
    <property type="protein sequence ID" value="ACC77801.1"/>
    <property type="molecule type" value="Genomic_DNA"/>
</dbReference>
<dbReference type="SMR" id="B5L5R4"/>
<dbReference type="MEROPS" id="I02.052"/>
<dbReference type="GO" id="GO:0005576">
    <property type="term" value="C:extracellular region"/>
    <property type="evidence" value="ECO:0007669"/>
    <property type="project" value="UniProtKB-SubCell"/>
</dbReference>
<dbReference type="GO" id="GO:0004867">
    <property type="term" value="F:serine-type endopeptidase inhibitor activity"/>
    <property type="evidence" value="ECO:0007669"/>
    <property type="project" value="UniProtKB-KW"/>
</dbReference>
<dbReference type="CDD" id="cd22594">
    <property type="entry name" value="Kunitz_textilinin-like"/>
    <property type="match status" value="1"/>
</dbReference>
<dbReference type="FunFam" id="4.10.410.10:FF:000004">
    <property type="entry name" value="Tissue factor pathway inhibitor"/>
    <property type="match status" value="1"/>
</dbReference>
<dbReference type="Gene3D" id="4.10.410.10">
    <property type="entry name" value="Pancreatic trypsin inhibitor Kunitz domain"/>
    <property type="match status" value="1"/>
</dbReference>
<dbReference type="InterPro" id="IPR002223">
    <property type="entry name" value="Kunitz_BPTI"/>
</dbReference>
<dbReference type="InterPro" id="IPR036880">
    <property type="entry name" value="Kunitz_BPTI_sf"/>
</dbReference>
<dbReference type="InterPro" id="IPR020901">
    <property type="entry name" value="Prtase_inh_Kunz-CS"/>
</dbReference>
<dbReference type="InterPro" id="IPR050098">
    <property type="entry name" value="TFPI/VKTCI-like"/>
</dbReference>
<dbReference type="PANTHER" id="PTHR10083">
    <property type="entry name" value="KUNITZ-TYPE PROTEASE INHIBITOR-RELATED"/>
    <property type="match status" value="1"/>
</dbReference>
<dbReference type="Pfam" id="PF00014">
    <property type="entry name" value="Kunitz_BPTI"/>
    <property type="match status" value="1"/>
</dbReference>
<dbReference type="PRINTS" id="PR00759">
    <property type="entry name" value="BASICPTASE"/>
</dbReference>
<dbReference type="SMART" id="SM00131">
    <property type="entry name" value="KU"/>
    <property type="match status" value="1"/>
</dbReference>
<dbReference type="SUPFAM" id="SSF57362">
    <property type="entry name" value="BPTI-like"/>
    <property type="match status" value="1"/>
</dbReference>
<dbReference type="PROSITE" id="PS00280">
    <property type="entry name" value="BPTI_KUNITZ_1"/>
    <property type="match status" value="1"/>
</dbReference>
<dbReference type="PROSITE" id="PS50279">
    <property type="entry name" value="BPTI_KUNITZ_2"/>
    <property type="match status" value="1"/>
</dbReference>
<accession>B5L5R4</accession>
<evidence type="ECO:0000250" key="1"/>
<evidence type="ECO:0000255" key="2"/>
<evidence type="ECO:0000255" key="3">
    <source>
        <dbReference type="PROSITE-ProRule" id="PRU00031"/>
    </source>
</evidence>
<evidence type="ECO:0000305" key="4"/>
<sequence>MSSGGLLLLLGLLTLWAELTPVSSKDRPKFCELPADSGPCRGILRAFYYHPVHRTCQMFIYGGCYGNANNFKTIDECKRTCAA</sequence>
<protein>
    <recommendedName>
        <fullName>Tigerin-4</fullName>
    </recommendedName>
</protein>
<keyword id="KW-1015">Disulfide bond</keyword>
<keyword id="KW-0646">Protease inhibitor</keyword>
<keyword id="KW-0964">Secreted</keyword>
<keyword id="KW-0722">Serine protease inhibitor</keyword>
<keyword id="KW-0732">Signal</keyword>
<proteinExistence type="inferred from homology"/>
<name>IVBI4_NOTSC</name>
<feature type="signal peptide" evidence="2">
    <location>
        <begin position="1"/>
        <end position="24"/>
    </location>
</feature>
<feature type="chain" id="PRO_5000395652" description="Tigerin-4">
    <location>
        <begin position="25"/>
        <end position="83"/>
    </location>
</feature>
<feature type="domain" description="BPTI/Kunitz inhibitor" evidence="3">
    <location>
        <begin position="31"/>
        <end position="81"/>
    </location>
</feature>
<feature type="site" description="Reactive bond for trypsin" evidence="1">
    <location>
        <begin position="41"/>
        <end position="42"/>
    </location>
</feature>
<feature type="disulfide bond" evidence="3">
    <location>
        <begin position="31"/>
        <end position="81"/>
    </location>
</feature>
<feature type="disulfide bond" evidence="3">
    <location>
        <begin position="40"/>
        <end position="64"/>
    </location>
</feature>
<feature type="disulfide bond" evidence="3">
    <location>
        <begin position="56"/>
        <end position="77"/>
    </location>
</feature>
<organism>
    <name type="scientific">Notechis scutatus scutatus</name>
    <name type="common">Mainland tiger snake</name>
    <name type="synonym">Common tiger snake</name>
    <dbReference type="NCBI Taxonomy" id="70142"/>
    <lineage>
        <taxon>Eukaryota</taxon>
        <taxon>Metazoa</taxon>
        <taxon>Chordata</taxon>
        <taxon>Craniata</taxon>
        <taxon>Vertebrata</taxon>
        <taxon>Euteleostomi</taxon>
        <taxon>Lepidosauria</taxon>
        <taxon>Squamata</taxon>
        <taxon>Bifurcata</taxon>
        <taxon>Unidentata</taxon>
        <taxon>Episquamata</taxon>
        <taxon>Toxicofera</taxon>
        <taxon>Serpentes</taxon>
        <taxon>Colubroidea</taxon>
        <taxon>Elapidae</taxon>
        <taxon>Hydrophiinae</taxon>
        <taxon>Notechis</taxon>
    </lineage>
</organism>
<reference key="1">
    <citation type="journal article" date="2008" name="Cell. Mol. Life Sci.">
        <title>Common evolution of waprin and Kunitz-like toxin families in Australian venomous snakes.</title>
        <authorList>
            <person name="St Pierre L."/>
            <person name="Earl S.T."/>
            <person name="Filippovich I."/>
            <person name="Sorokina N."/>
            <person name="Masci P.P."/>
            <person name="De Jersey J."/>
            <person name="Lavin M.F."/>
        </authorList>
    </citation>
    <scope>NUCLEOTIDE SEQUENCE [GENOMIC DNA]</scope>
    <source>
        <tissue>Venom gland</tissue>
    </source>
</reference>
<comment type="function">
    <text evidence="4">Serine protease inhibitor.</text>
</comment>
<comment type="subcellular location">
    <subcellularLocation>
        <location evidence="1">Secreted</location>
    </subcellularLocation>
</comment>